<comment type="function">
    <text evidence="1">May be involved sperm-egg plasma membrane adhesion and fusion during fertilization. Exhibits bacteriolytic activity in vitro against Micrococcus luteus and Staphylococcus aureus. Shows weak bacteriolytic activity against Gram-positive bacteria at physiological pH. Bacteriolytic activity is pH-dependent, with a maximum at around pH 5.6 (By similarity).</text>
</comment>
<comment type="catalytic activity">
    <reaction>
        <text>Hydrolysis of (1-&gt;4)-beta-linkages between N-acetylmuramic acid and N-acetyl-D-glucosamine residues in a peptidoglycan and between N-acetyl-D-glucosamine residues in chitodextrins.</text>
        <dbReference type="EC" id="3.2.1.17"/>
    </reaction>
</comment>
<comment type="subunit">
    <text evidence="5">Monomer.</text>
</comment>
<comment type="subcellular location">
    <subcellularLocation>
        <location evidence="1">Secreted</location>
    </subcellularLocation>
    <subcellularLocation>
        <location evidence="1">Cell surface</location>
    </subcellularLocation>
    <subcellularLocation>
        <location evidence="2">Cell projection</location>
        <location evidence="2">Cilium</location>
        <location evidence="2">Flagellum</location>
    </subcellularLocation>
    <text evidence="2">Detected in the post-acrosomal area and midpiece of mature spermatozoa.</text>
</comment>
<comment type="similarity">
    <text evidence="4">Belongs to the glycosyl hydrolase 22 family.</text>
</comment>
<evidence type="ECO:0000250" key="1">
    <source>
        <dbReference type="UniProtKB" id="O75951"/>
    </source>
</evidence>
<evidence type="ECO:0000250" key="2">
    <source>
        <dbReference type="UniProtKB" id="Q9DA11"/>
    </source>
</evidence>
<evidence type="ECO:0000255" key="3"/>
<evidence type="ECO:0000255" key="4">
    <source>
        <dbReference type="PROSITE-ProRule" id="PRU00680"/>
    </source>
</evidence>
<evidence type="ECO:0000305" key="5"/>
<proteinExistence type="evidence at transcript level"/>
<accession>Q29RT1</accession>
<sequence length="148" mass="16559">MTSPLLISLASCLVAVNQASLIGRCDLAKVLHQEDLDGFEGYSLTDWLCLAFVESDFNITKVNENTDGSFDYGIFQINSHYWCNDYQSRTENNCQVDCQELLSPNLLAIINCAKKIVSGAGGMKNWVKWRLHCAGRPLSYWMTGCHLA</sequence>
<protein>
    <recommendedName>
        <fullName>Lysozyme-like protein 6</fullName>
        <ecNumber>3.2.1.17</ecNumber>
    </recommendedName>
</protein>
<name>LYZL6_BOVIN</name>
<feature type="signal peptide" evidence="3">
    <location>
        <begin position="1"/>
        <end position="19"/>
    </location>
</feature>
<feature type="chain" id="PRO_0000287125" description="Lysozyme-like protein 6">
    <location>
        <begin position="20"/>
        <end position="148"/>
    </location>
</feature>
<feature type="domain" description="C-type lysozyme" evidence="4">
    <location>
        <begin position="20"/>
        <end position="148"/>
    </location>
</feature>
<feature type="active site" evidence="4">
    <location>
        <position position="54"/>
    </location>
</feature>
<feature type="active site" evidence="4">
    <location>
        <position position="71"/>
    </location>
</feature>
<feature type="disulfide bond" evidence="4">
    <location>
        <begin position="25"/>
        <end position="145"/>
    </location>
</feature>
<feature type="disulfide bond" evidence="4">
    <location>
        <begin position="49"/>
        <end position="133"/>
    </location>
</feature>
<feature type="disulfide bond" evidence="4">
    <location>
        <begin position="83"/>
        <end position="98"/>
    </location>
</feature>
<feature type="disulfide bond" evidence="4">
    <location>
        <begin position="94"/>
        <end position="112"/>
    </location>
</feature>
<keyword id="KW-0929">Antimicrobial</keyword>
<keyword id="KW-0081">Bacteriolytic enzyme</keyword>
<keyword id="KW-0966">Cell projection</keyword>
<keyword id="KW-0969">Cilium</keyword>
<keyword id="KW-1015">Disulfide bond</keyword>
<keyword id="KW-0278">Fertilization</keyword>
<keyword id="KW-0282">Flagellum</keyword>
<keyword id="KW-0326">Glycosidase</keyword>
<keyword id="KW-0378">Hydrolase</keyword>
<keyword id="KW-1185">Reference proteome</keyword>
<keyword id="KW-0964">Secreted</keyword>
<keyword id="KW-0732">Signal</keyword>
<gene>
    <name type="primary">LYZL6</name>
</gene>
<organism>
    <name type="scientific">Bos taurus</name>
    <name type="common">Bovine</name>
    <dbReference type="NCBI Taxonomy" id="9913"/>
    <lineage>
        <taxon>Eukaryota</taxon>
        <taxon>Metazoa</taxon>
        <taxon>Chordata</taxon>
        <taxon>Craniata</taxon>
        <taxon>Vertebrata</taxon>
        <taxon>Euteleostomi</taxon>
        <taxon>Mammalia</taxon>
        <taxon>Eutheria</taxon>
        <taxon>Laurasiatheria</taxon>
        <taxon>Artiodactyla</taxon>
        <taxon>Ruminantia</taxon>
        <taxon>Pecora</taxon>
        <taxon>Bovidae</taxon>
        <taxon>Bovinae</taxon>
        <taxon>Bos</taxon>
    </lineage>
</organism>
<dbReference type="EC" id="3.2.1.17"/>
<dbReference type="EMBL" id="BC114039">
    <property type="protein sequence ID" value="AAI14040.1"/>
    <property type="molecule type" value="mRNA"/>
</dbReference>
<dbReference type="RefSeq" id="NP_001039931.1">
    <property type="nucleotide sequence ID" value="NM_001046466.1"/>
</dbReference>
<dbReference type="SMR" id="Q29RT1"/>
<dbReference type="FunCoup" id="Q29RT1">
    <property type="interactions" value="40"/>
</dbReference>
<dbReference type="STRING" id="9913.ENSBTAP00000056667"/>
<dbReference type="CAZy" id="GH22">
    <property type="family name" value="Glycoside Hydrolase Family 22"/>
</dbReference>
<dbReference type="PaxDb" id="9913-ENSBTAP00000000032"/>
<dbReference type="GeneID" id="540048"/>
<dbReference type="KEGG" id="bta:540048"/>
<dbReference type="CTD" id="57151"/>
<dbReference type="eggNOG" id="ENOG502SCGK">
    <property type="taxonomic scope" value="Eukaryota"/>
</dbReference>
<dbReference type="InParanoid" id="Q29RT1"/>
<dbReference type="OrthoDB" id="17373at2759"/>
<dbReference type="Proteomes" id="UP000009136">
    <property type="component" value="Unplaced"/>
</dbReference>
<dbReference type="GO" id="GO:0001669">
    <property type="term" value="C:acrosomal vesicle"/>
    <property type="evidence" value="ECO:0000318"/>
    <property type="project" value="GO_Central"/>
</dbReference>
<dbReference type="GO" id="GO:0009986">
    <property type="term" value="C:cell surface"/>
    <property type="evidence" value="ECO:0007669"/>
    <property type="project" value="UniProtKB-SubCell"/>
</dbReference>
<dbReference type="GO" id="GO:0005576">
    <property type="term" value="C:extracellular region"/>
    <property type="evidence" value="ECO:0007669"/>
    <property type="project" value="UniProtKB-SubCell"/>
</dbReference>
<dbReference type="GO" id="GO:0036126">
    <property type="term" value="C:sperm flagellum"/>
    <property type="evidence" value="ECO:0000318"/>
    <property type="project" value="GO_Central"/>
</dbReference>
<dbReference type="GO" id="GO:0097225">
    <property type="term" value="C:sperm midpiece"/>
    <property type="evidence" value="ECO:0000250"/>
    <property type="project" value="UniProtKB"/>
</dbReference>
<dbReference type="GO" id="GO:0097524">
    <property type="term" value="C:sperm plasma membrane"/>
    <property type="evidence" value="ECO:0000250"/>
    <property type="project" value="UniProtKB"/>
</dbReference>
<dbReference type="GO" id="GO:0003796">
    <property type="term" value="F:lysozyme activity"/>
    <property type="evidence" value="ECO:0000318"/>
    <property type="project" value="GO_Central"/>
</dbReference>
<dbReference type="GO" id="GO:0042742">
    <property type="term" value="P:defense response to bacterium"/>
    <property type="evidence" value="ECO:0000250"/>
    <property type="project" value="UniProtKB"/>
</dbReference>
<dbReference type="GO" id="GO:0009566">
    <property type="term" value="P:fertilization"/>
    <property type="evidence" value="ECO:0000250"/>
    <property type="project" value="UniProtKB"/>
</dbReference>
<dbReference type="GO" id="GO:0007342">
    <property type="term" value="P:fusion of sperm to egg plasma membrane involved in single fertilization"/>
    <property type="evidence" value="ECO:0000250"/>
    <property type="project" value="UniProtKB"/>
</dbReference>
<dbReference type="GO" id="GO:0031640">
    <property type="term" value="P:killing of cells of another organism"/>
    <property type="evidence" value="ECO:0007669"/>
    <property type="project" value="UniProtKB-KW"/>
</dbReference>
<dbReference type="CDD" id="cd16897">
    <property type="entry name" value="LYZ_C"/>
    <property type="match status" value="1"/>
</dbReference>
<dbReference type="FunFam" id="1.10.530.10:FF:000001">
    <property type="entry name" value="Lysozyme C"/>
    <property type="match status" value="1"/>
</dbReference>
<dbReference type="Gene3D" id="1.10.530.10">
    <property type="match status" value="1"/>
</dbReference>
<dbReference type="InterPro" id="IPR001916">
    <property type="entry name" value="Glyco_hydro_22"/>
</dbReference>
<dbReference type="InterPro" id="IPR019799">
    <property type="entry name" value="Glyco_hydro_22_CS"/>
</dbReference>
<dbReference type="InterPro" id="IPR000974">
    <property type="entry name" value="Glyco_hydro_22_lys"/>
</dbReference>
<dbReference type="InterPro" id="IPR023346">
    <property type="entry name" value="Lysozyme-like_dom_sf"/>
</dbReference>
<dbReference type="PANTHER" id="PTHR11407">
    <property type="entry name" value="LYSOZYME C"/>
    <property type="match status" value="1"/>
</dbReference>
<dbReference type="PANTHER" id="PTHR11407:SF9">
    <property type="entry name" value="LYSOZYME-LIKE PROTEIN 6"/>
    <property type="match status" value="1"/>
</dbReference>
<dbReference type="Pfam" id="PF00062">
    <property type="entry name" value="Lys"/>
    <property type="match status" value="1"/>
</dbReference>
<dbReference type="PRINTS" id="PR00137">
    <property type="entry name" value="LYSOZYME"/>
</dbReference>
<dbReference type="PRINTS" id="PR00135">
    <property type="entry name" value="LYZLACT"/>
</dbReference>
<dbReference type="SMART" id="SM00263">
    <property type="entry name" value="LYZ1"/>
    <property type="match status" value="1"/>
</dbReference>
<dbReference type="SUPFAM" id="SSF53955">
    <property type="entry name" value="Lysozyme-like"/>
    <property type="match status" value="1"/>
</dbReference>
<dbReference type="PROSITE" id="PS00128">
    <property type="entry name" value="GLYCOSYL_HYDROL_F22_1"/>
    <property type="match status" value="1"/>
</dbReference>
<dbReference type="PROSITE" id="PS51348">
    <property type="entry name" value="GLYCOSYL_HYDROL_F22_2"/>
    <property type="match status" value="1"/>
</dbReference>
<reference key="1">
    <citation type="submission" date="2006-02" db="EMBL/GenBank/DDBJ databases">
        <authorList>
            <consortium name="NIH - Mammalian Gene Collection (MGC) project"/>
        </authorList>
    </citation>
    <scope>NUCLEOTIDE SEQUENCE [LARGE SCALE MRNA]</scope>
    <source>
        <strain>Hereford</strain>
        <tissue>Testis</tissue>
    </source>
</reference>